<reference key="1">
    <citation type="submission" date="2006-03" db="EMBL/GenBank/DDBJ databases">
        <title>Complete genome sequence of Francisella tularensis LVS (Live Vaccine Strain).</title>
        <authorList>
            <person name="Chain P."/>
            <person name="Larimer F."/>
            <person name="Land M."/>
            <person name="Stilwagen S."/>
            <person name="Larsson P."/>
            <person name="Bearden S."/>
            <person name="Chu M."/>
            <person name="Oyston P."/>
            <person name="Forsman M."/>
            <person name="Andersson S."/>
            <person name="Lindler L."/>
            <person name="Titball R."/>
            <person name="Garcia E."/>
        </authorList>
    </citation>
    <scope>NUCLEOTIDE SEQUENCE [LARGE SCALE GENOMIC DNA]</scope>
    <source>
        <strain>LVS</strain>
    </source>
</reference>
<comment type="function">
    <text evidence="1">Catalyzes a mechanistically unusual reaction, the ATP-dependent insertion of CO2 between the N7 and N8 nitrogen atoms of 7,8-diaminopelargonic acid (DAPA, also called 7,8-diammoniononanoate) to form a ureido ring.</text>
</comment>
<comment type="catalytic activity">
    <reaction evidence="1">
        <text>(7R,8S)-7,8-diammoniononanoate + CO2 + ATP = (4R,5S)-dethiobiotin + ADP + phosphate + 3 H(+)</text>
        <dbReference type="Rhea" id="RHEA:15805"/>
        <dbReference type="ChEBI" id="CHEBI:15378"/>
        <dbReference type="ChEBI" id="CHEBI:16526"/>
        <dbReference type="ChEBI" id="CHEBI:30616"/>
        <dbReference type="ChEBI" id="CHEBI:43474"/>
        <dbReference type="ChEBI" id="CHEBI:149469"/>
        <dbReference type="ChEBI" id="CHEBI:149473"/>
        <dbReference type="ChEBI" id="CHEBI:456216"/>
        <dbReference type="EC" id="6.3.3.3"/>
    </reaction>
</comment>
<comment type="cofactor">
    <cofactor evidence="1">
        <name>Mg(2+)</name>
        <dbReference type="ChEBI" id="CHEBI:18420"/>
    </cofactor>
</comment>
<comment type="pathway">
    <text evidence="1">Cofactor biosynthesis; biotin biosynthesis; biotin from 7,8-diaminononanoate: step 1/2.</text>
</comment>
<comment type="subunit">
    <text evidence="1">Homodimer.</text>
</comment>
<comment type="subcellular location">
    <subcellularLocation>
        <location evidence="1">Cytoplasm</location>
    </subcellularLocation>
</comment>
<comment type="similarity">
    <text evidence="1">Belongs to the dethiobiotin synthetase family.</text>
</comment>
<evidence type="ECO:0000255" key="1">
    <source>
        <dbReference type="HAMAP-Rule" id="MF_00336"/>
    </source>
</evidence>
<accession>Q2A2V6</accession>
<proteinExistence type="inferred from homology"/>
<sequence length="219" mass="24502">MKKFFIIGTNTEVGKTYISTKLIEVCEHQNIKSLCLKPVASGQSQFSELCEDVESILNAYKHKFTAAEINLISFNQAVAPHIIAAKTKVDISIENLKQFIEDKYNQDLDILFIEGAGGLLTPYSDHTTQLDLIKALQIPVLLVSAIKVGCINHTLLTINELNRHNIKLAGWIANCNDSNIKYIDEQINTIEELSGYKCSAKISRNADYLDFIDLSKILI</sequence>
<name>BIOD_FRATH</name>
<keyword id="KW-0067">ATP-binding</keyword>
<keyword id="KW-0093">Biotin biosynthesis</keyword>
<keyword id="KW-0963">Cytoplasm</keyword>
<keyword id="KW-0436">Ligase</keyword>
<keyword id="KW-0460">Magnesium</keyword>
<keyword id="KW-0479">Metal-binding</keyword>
<keyword id="KW-0547">Nucleotide-binding</keyword>
<keyword id="KW-1185">Reference proteome</keyword>
<feature type="chain" id="PRO_0000302505" description="ATP-dependent dethiobiotin synthetase BioD">
    <location>
        <begin position="1"/>
        <end position="219"/>
    </location>
</feature>
<feature type="active site" evidence="1">
    <location>
        <position position="37"/>
    </location>
</feature>
<feature type="binding site" evidence="1">
    <location>
        <begin position="12"/>
        <end position="17"/>
    </location>
    <ligand>
        <name>ATP</name>
        <dbReference type="ChEBI" id="CHEBI:30616"/>
    </ligand>
</feature>
<feature type="binding site" evidence="1">
    <location>
        <position position="16"/>
    </location>
    <ligand>
        <name>Mg(2+)</name>
        <dbReference type="ChEBI" id="CHEBI:18420"/>
    </ligand>
</feature>
<feature type="binding site" evidence="1">
    <location>
        <position position="41"/>
    </location>
    <ligand>
        <name>substrate</name>
    </ligand>
</feature>
<feature type="binding site" evidence="1">
    <location>
        <position position="52"/>
    </location>
    <ligand>
        <name>ATP</name>
        <dbReference type="ChEBI" id="CHEBI:30616"/>
    </ligand>
</feature>
<feature type="binding site" evidence="1">
    <location>
        <position position="52"/>
    </location>
    <ligand>
        <name>Mg(2+)</name>
        <dbReference type="ChEBI" id="CHEBI:18420"/>
    </ligand>
</feature>
<feature type="binding site" evidence="1">
    <location>
        <begin position="114"/>
        <end position="117"/>
    </location>
    <ligand>
        <name>ATP</name>
        <dbReference type="ChEBI" id="CHEBI:30616"/>
    </ligand>
</feature>
<feature type="binding site" evidence="1">
    <location>
        <position position="114"/>
    </location>
    <ligand>
        <name>Mg(2+)</name>
        <dbReference type="ChEBI" id="CHEBI:18420"/>
    </ligand>
</feature>
<feature type="binding site" evidence="1">
    <location>
        <begin position="174"/>
        <end position="175"/>
    </location>
    <ligand>
        <name>ATP</name>
        <dbReference type="ChEBI" id="CHEBI:30616"/>
    </ligand>
</feature>
<protein>
    <recommendedName>
        <fullName evidence="1">ATP-dependent dethiobiotin synthetase BioD</fullName>
        <ecNumber evidence="1">6.3.3.3</ecNumber>
    </recommendedName>
    <alternativeName>
        <fullName evidence="1">DTB synthetase</fullName>
        <shortName evidence="1">DTBS</shortName>
    </alternativeName>
    <alternativeName>
        <fullName evidence="1">Dethiobiotin synthase</fullName>
    </alternativeName>
</protein>
<organism>
    <name type="scientific">Francisella tularensis subsp. holarctica (strain LVS)</name>
    <dbReference type="NCBI Taxonomy" id="376619"/>
    <lineage>
        <taxon>Bacteria</taxon>
        <taxon>Pseudomonadati</taxon>
        <taxon>Pseudomonadota</taxon>
        <taxon>Gammaproteobacteria</taxon>
        <taxon>Thiotrichales</taxon>
        <taxon>Francisellaceae</taxon>
        <taxon>Francisella</taxon>
    </lineage>
</organism>
<gene>
    <name evidence="1" type="primary">bioD</name>
    <name type="ordered locus">FTL_1275</name>
</gene>
<dbReference type="EC" id="6.3.3.3" evidence="1"/>
<dbReference type="EMBL" id="AM233362">
    <property type="protein sequence ID" value="CAJ79714.1"/>
    <property type="molecule type" value="Genomic_DNA"/>
</dbReference>
<dbReference type="RefSeq" id="WP_003016414.1">
    <property type="nucleotide sequence ID" value="NZ_CP009694.1"/>
</dbReference>
<dbReference type="SMR" id="Q2A2V6"/>
<dbReference type="KEGG" id="ftl:FTL_1275"/>
<dbReference type="UniPathway" id="UPA00078">
    <property type="reaction ID" value="UER00161"/>
</dbReference>
<dbReference type="Proteomes" id="UP000001944">
    <property type="component" value="Chromosome"/>
</dbReference>
<dbReference type="GO" id="GO:0005829">
    <property type="term" value="C:cytosol"/>
    <property type="evidence" value="ECO:0007669"/>
    <property type="project" value="TreeGrafter"/>
</dbReference>
<dbReference type="GO" id="GO:0005524">
    <property type="term" value="F:ATP binding"/>
    <property type="evidence" value="ECO:0007669"/>
    <property type="project" value="UniProtKB-UniRule"/>
</dbReference>
<dbReference type="GO" id="GO:0004141">
    <property type="term" value="F:dethiobiotin synthase activity"/>
    <property type="evidence" value="ECO:0007669"/>
    <property type="project" value="UniProtKB-UniRule"/>
</dbReference>
<dbReference type="GO" id="GO:0000287">
    <property type="term" value="F:magnesium ion binding"/>
    <property type="evidence" value="ECO:0007669"/>
    <property type="project" value="UniProtKB-UniRule"/>
</dbReference>
<dbReference type="GO" id="GO:0009102">
    <property type="term" value="P:biotin biosynthetic process"/>
    <property type="evidence" value="ECO:0007669"/>
    <property type="project" value="UniProtKB-UniRule"/>
</dbReference>
<dbReference type="CDD" id="cd03109">
    <property type="entry name" value="DTBS"/>
    <property type="match status" value="1"/>
</dbReference>
<dbReference type="Gene3D" id="3.40.50.300">
    <property type="entry name" value="P-loop containing nucleotide triphosphate hydrolases"/>
    <property type="match status" value="1"/>
</dbReference>
<dbReference type="HAMAP" id="MF_00336">
    <property type="entry name" value="BioD"/>
    <property type="match status" value="1"/>
</dbReference>
<dbReference type="InterPro" id="IPR004472">
    <property type="entry name" value="DTB_synth_BioD"/>
</dbReference>
<dbReference type="InterPro" id="IPR027417">
    <property type="entry name" value="P-loop_NTPase"/>
</dbReference>
<dbReference type="NCBIfam" id="TIGR00347">
    <property type="entry name" value="bioD"/>
    <property type="match status" value="1"/>
</dbReference>
<dbReference type="PANTHER" id="PTHR43210">
    <property type="entry name" value="DETHIOBIOTIN SYNTHETASE"/>
    <property type="match status" value="1"/>
</dbReference>
<dbReference type="PANTHER" id="PTHR43210:SF5">
    <property type="entry name" value="DETHIOBIOTIN SYNTHETASE"/>
    <property type="match status" value="1"/>
</dbReference>
<dbReference type="Pfam" id="PF13500">
    <property type="entry name" value="AAA_26"/>
    <property type="match status" value="1"/>
</dbReference>
<dbReference type="PIRSF" id="PIRSF006755">
    <property type="entry name" value="DTB_synth"/>
    <property type="match status" value="1"/>
</dbReference>
<dbReference type="SUPFAM" id="SSF52540">
    <property type="entry name" value="P-loop containing nucleoside triphosphate hydrolases"/>
    <property type="match status" value="1"/>
</dbReference>